<sequence>MPNIVLFSGSSHQDLSQRVADRLGLELGKVVTKKFSNQETSVEIGESVRGEDVYIIQSGCGEINDNLMELLIMINACKIASSSRVTAVIPCFPYARQDKKDKSRAPISAKLVANMLSVAGADHIITMDLHASQIQGFFDIPVDNLYAEPAVLQWIRENIAEWKNCIIVSPDAGGAKRVTSIADRLNVEFALIHKERKKANEVDRMVLVGDVKDRVAILVDDMADTCGTICHAADKLLSAGATKVYAILTHGIFSGPAISRINNAAFEAVVVTNTIPQEDKMKHCTKIQVIDISMILAEAIRRTHNGESVSYLFSHVPL</sequence>
<organism>
    <name type="scientific">Homo sapiens</name>
    <name type="common">Human</name>
    <dbReference type="NCBI Taxonomy" id="9606"/>
    <lineage>
        <taxon>Eukaryota</taxon>
        <taxon>Metazoa</taxon>
        <taxon>Chordata</taxon>
        <taxon>Craniata</taxon>
        <taxon>Vertebrata</taxon>
        <taxon>Euteleostomi</taxon>
        <taxon>Mammalia</taxon>
        <taxon>Eutheria</taxon>
        <taxon>Euarchontoglires</taxon>
        <taxon>Primates</taxon>
        <taxon>Haplorrhini</taxon>
        <taxon>Catarrhini</taxon>
        <taxon>Hominidae</taxon>
        <taxon>Homo</taxon>
    </lineage>
</organism>
<name>PRPS2_HUMAN</name>
<keyword id="KW-0002">3D-structure</keyword>
<keyword id="KW-0025">Alternative splicing</keyword>
<keyword id="KW-0067">ATP-binding</keyword>
<keyword id="KW-0903">Direct protein sequencing</keyword>
<keyword id="KW-0418">Kinase</keyword>
<keyword id="KW-0460">Magnesium</keyword>
<keyword id="KW-0479">Metal-binding</keyword>
<keyword id="KW-0545">Nucleotide biosynthesis</keyword>
<keyword id="KW-0547">Nucleotide-binding</keyword>
<keyword id="KW-1267">Proteomics identification</keyword>
<keyword id="KW-1185">Reference proteome</keyword>
<keyword id="KW-0808">Transferase</keyword>
<comment type="function">
    <text>Catalyzes the synthesis of phosphoribosylpyrophosphate (PRPP) that is essential for nucleotide synthesis.</text>
</comment>
<comment type="catalytic activity">
    <reaction>
        <text>D-ribose 5-phosphate + ATP = 5-phospho-alpha-D-ribose 1-diphosphate + AMP + H(+)</text>
        <dbReference type="Rhea" id="RHEA:15609"/>
        <dbReference type="ChEBI" id="CHEBI:15378"/>
        <dbReference type="ChEBI" id="CHEBI:30616"/>
        <dbReference type="ChEBI" id="CHEBI:58017"/>
        <dbReference type="ChEBI" id="CHEBI:78346"/>
        <dbReference type="ChEBI" id="CHEBI:456215"/>
        <dbReference type="EC" id="2.7.6.1"/>
    </reaction>
</comment>
<comment type="cofactor">
    <cofactor>
        <name>Mg(2+)</name>
        <dbReference type="ChEBI" id="CHEBI:18420"/>
    </cofactor>
</comment>
<comment type="activity regulation">
    <text>Activated by magnesium and inorganic phosphate. Competitively or non-competitively inhibited by ADP, 2,3-bisphosphoglyceride or GDP.</text>
</comment>
<comment type="pathway">
    <text>Metabolic intermediate biosynthesis; 5-phospho-alpha-D-ribose 1-diphosphate biosynthesis; 5-phospho-alpha-D-ribose 1-diphosphate from D-ribose 5-phosphate (route I): step 1/1.</text>
</comment>
<comment type="subunit">
    <text evidence="1">Homodimer. The active form is probably a hexamer composed of 3 homodimers (By similarity).</text>
</comment>
<comment type="interaction">
    <interactant intactId="EBI-4290895">
        <id>P11908</id>
    </interactant>
    <interactant intactId="EBI-747754">
        <id>P28799</id>
        <label>GRN</label>
    </interactant>
    <organismsDiffer>false</organismsDiffer>
    <experiments>3</experiments>
</comment>
<comment type="interaction">
    <interactant intactId="EBI-4290895">
        <id>P11908</id>
    </interactant>
    <interactant intactId="EBI-352682">
        <id>P04792</id>
        <label>HSPB1</label>
    </interactant>
    <organismsDiffer>false</organismsDiffer>
    <experiments>3</experiments>
</comment>
<comment type="interaction">
    <interactant intactId="EBI-4290895">
        <id>P11908</id>
    </interactant>
    <interactant intactId="EBI-10975473">
        <id>O60333-2</id>
        <label>KIF1B</label>
    </interactant>
    <organismsDiffer>false</organismsDiffer>
    <experiments>3</experiments>
</comment>
<comment type="interaction">
    <interactant intactId="EBI-4290895">
        <id>P11908</id>
    </interactant>
    <interactant intactId="EBI-945833">
        <id>Q7Z3S9</id>
        <label>NOTCH2NLA</label>
    </interactant>
    <organismsDiffer>false</organismsDiffer>
    <experiments>3</experiments>
</comment>
<comment type="interaction">
    <interactant intactId="EBI-4290895">
        <id>P11908</id>
    </interactant>
    <interactant intactId="EBI-741158">
        <id>Q96HA8</id>
        <label>NTAQ1</label>
    </interactant>
    <organismsDiffer>false</organismsDiffer>
    <experiments>4</experiments>
</comment>
<comment type="interaction">
    <interactant intactId="EBI-4290895">
        <id>P11908</id>
    </interactant>
    <interactant intactId="EBI-749195">
        <id>P60891</id>
        <label>PRPS1</label>
    </interactant>
    <organismsDiffer>false</organismsDiffer>
    <experiments>12</experiments>
</comment>
<comment type="interaction">
    <interactant intactId="EBI-4290895">
        <id>P11908</id>
    </interactant>
    <interactant intactId="EBI-4290895">
        <id>P11908</id>
        <label>PRPS2</label>
    </interactant>
    <organismsDiffer>false</organismsDiffer>
    <experiments>4</experiments>
</comment>
<comment type="interaction">
    <interactant intactId="EBI-4290895">
        <id>P11908</id>
    </interactant>
    <interactant intactId="EBI-724449">
        <id>Q14558</id>
        <label>PRPSAP1</label>
    </interactant>
    <organismsDiffer>false</organismsDiffer>
    <experiments>7</experiments>
</comment>
<comment type="interaction">
    <interactant intactId="EBI-4290895">
        <id>P11908</id>
    </interactant>
    <interactant intactId="EBI-396669">
        <id>Q9Y3C5</id>
        <label>RNF11</label>
    </interactant>
    <organismsDiffer>false</organismsDiffer>
    <experiments>3</experiments>
</comment>
<comment type="interaction">
    <interactant intactId="EBI-4290895">
        <id>P11908</id>
    </interactant>
    <interactant intactId="EBI-711909">
        <id>P02766</id>
        <label>TTR</label>
    </interactant>
    <organismsDiffer>false</organismsDiffer>
    <experiments>3</experiments>
</comment>
<comment type="interaction">
    <interactant intactId="EBI-4290895">
        <id>P11908</id>
    </interactant>
    <interactant intactId="EBI-720609">
        <id>O76024</id>
        <label>WFS1</label>
    </interactant>
    <organismsDiffer>false</organismsDiffer>
    <experiments>3</experiments>
</comment>
<comment type="interaction">
    <interactant intactId="EBI-12063547">
        <id>P11908-2</id>
    </interactant>
    <interactant intactId="EBI-749195">
        <id>P60891</id>
        <label>PRPS1</label>
    </interactant>
    <organismsDiffer>false</organismsDiffer>
    <experiments>4</experiments>
</comment>
<comment type="interaction">
    <interactant intactId="EBI-12063547">
        <id>P11908-2</id>
    </interactant>
    <interactant intactId="EBI-724449">
        <id>Q14558</id>
        <label>PRPSAP1</label>
    </interactant>
    <organismsDiffer>false</organismsDiffer>
    <experiments>3</experiments>
</comment>
<comment type="interaction">
    <interactant intactId="EBI-12063547">
        <id>P11908-2</id>
    </interactant>
    <interactant intactId="EBI-724960">
        <id>O60256</id>
        <label>PRPSAP2</label>
    </interactant>
    <organismsDiffer>false</organismsDiffer>
    <experiments>4</experiments>
</comment>
<comment type="alternative products">
    <event type="alternative splicing"/>
    <isoform>
        <id>P11908-1</id>
        <name>1</name>
        <sequence type="displayed"/>
    </isoform>
    <isoform>
        <id>P11908-2</id>
        <name>2</name>
        <sequence type="described" ref="VSP_027769"/>
    </isoform>
</comment>
<comment type="similarity">
    <text evidence="5">Belongs to the ribose-phosphate pyrophosphokinase family.</text>
</comment>
<comment type="sequence caution" evidence="5">
    <conflict type="erroneous initiation">
        <sequence resource="EMBL-CDS" id="AAH30019"/>
    </conflict>
</comment>
<protein>
    <recommendedName>
        <fullName>Ribose-phosphate pyrophosphokinase 2</fullName>
        <ecNumber>2.7.6.1</ecNumber>
    </recommendedName>
    <alternativeName>
        <fullName>PPRibP</fullName>
    </alternativeName>
    <alternativeName>
        <fullName>Phosphoribosyl pyrophosphate synthase II</fullName>
        <shortName>PRS-II</shortName>
    </alternativeName>
</protein>
<feature type="initiator methionine" description="Removed" evidence="3">
    <location>
        <position position="1"/>
    </location>
</feature>
<feature type="chain" id="PRO_0000141074" description="Ribose-phosphate pyrophosphokinase 2">
    <location>
        <begin position="2"/>
        <end position="318"/>
    </location>
</feature>
<feature type="region of interest" description="Binding of phosphoribosylpyrophosphate" evidence="2">
    <location>
        <begin position="212"/>
        <end position="227"/>
    </location>
</feature>
<feature type="binding site" evidence="1">
    <location>
        <begin position="96"/>
        <end position="101"/>
    </location>
    <ligand>
        <name>ATP</name>
        <dbReference type="ChEBI" id="CHEBI:30616"/>
    </ligand>
</feature>
<feature type="binding site" evidence="2">
    <location>
        <position position="128"/>
    </location>
    <ligand>
        <name>Mg(2+)</name>
        <dbReference type="ChEBI" id="CHEBI:18420"/>
    </ligand>
</feature>
<feature type="binding site" evidence="1">
    <location>
        <position position="130"/>
    </location>
    <ligand>
        <name>ATP</name>
        <dbReference type="ChEBI" id="CHEBI:30616"/>
    </ligand>
</feature>
<feature type="binding site" evidence="2">
    <location>
        <position position="130"/>
    </location>
    <ligand>
        <name>Mg(2+)</name>
        <dbReference type="ChEBI" id="CHEBI:18420"/>
    </ligand>
</feature>
<feature type="binding site" evidence="2">
    <location>
        <position position="139"/>
    </location>
    <ligand>
        <name>Mg(2+)</name>
        <dbReference type="ChEBI" id="CHEBI:18420"/>
    </ligand>
</feature>
<feature type="binding site" evidence="2">
    <location>
        <position position="143"/>
    </location>
    <ligand>
        <name>Mg(2+)</name>
        <dbReference type="ChEBI" id="CHEBI:18420"/>
    </ligand>
</feature>
<feature type="splice variant" id="VSP_027769" description="In isoform 2." evidence="4">
    <original>K</original>
    <variation>KVGE</variation>
    <location>
        <position position="102"/>
    </location>
</feature>
<feature type="strand" evidence="6">
    <location>
        <begin position="4"/>
        <end position="8"/>
    </location>
</feature>
<feature type="helix" evidence="6">
    <location>
        <begin position="13"/>
        <end position="23"/>
    </location>
</feature>
<feature type="strand" evidence="6">
    <location>
        <begin position="30"/>
        <end position="34"/>
    </location>
</feature>
<feature type="strand" evidence="6">
    <location>
        <begin position="40"/>
        <end position="44"/>
    </location>
</feature>
<feature type="strand" evidence="6">
    <location>
        <begin position="52"/>
        <end position="56"/>
    </location>
</feature>
<feature type="helix" evidence="6">
    <location>
        <begin position="63"/>
        <end position="79"/>
    </location>
</feature>
<feature type="strand" evidence="6">
    <location>
        <begin position="83"/>
        <end position="91"/>
    </location>
</feature>
<feature type="turn" evidence="6">
    <location>
        <begin position="93"/>
        <end position="96"/>
    </location>
</feature>
<feature type="strand" evidence="6">
    <location>
        <begin position="102"/>
        <end position="104"/>
    </location>
</feature>
<feature type="helix" evidence="6">
    <location>
        <begin position="108"/>
        <end position="119"/>
    </location>
</feature>
<feature type="strand" evidence="6">
    <location>
        <begin position="123"/>
        <end position="128"/>
    </location>
</feature>
<feature type="helix" evidence="6">
    <location>
        <begin position="132"/>
        <end position="137"/>
    </location>
</feature>
<feature type="strand" evidence="6">
    <location>
        <begin position="142"/>
        <end position="145"/>
    </location>
</feature>
<feature type="helix" evidence="6">
    <location>
        <begin position="148"/>
        <end position="158"/>
    </location>
</feature>
<feature type="helix" evidence="6">
    <location>
        <begin position="162"/>
        <end position="164"/>
    </location>
</feature>
<feature type="strand" evidence="6">
    <location>
        <begin position="166"/>
        <end position="168"/>
    </location>
</feature>
<feature type="strand" evidence="6">
    <location>
        <begin position="170"/>
        <end position="172"/>
    </location>
</feature>
<feature type="helix" evidence="6">
    <location>
        <begin position="175"/>
        <end position="183"/>
    </location>
</feature>
<feature type="strand" evidence="6">
    <location>
        <begin position="191"/>
        <end position="193"/>
    </location>
</feature>
<feature type="strand" evidence="6">
    <location>
        <begin position="206"/>
        <end position="209"/>
    </location>
</feature>
<feature type="strand" evidence="6">
    <location>
        <begin position="216"/>
        <end position="219"/>
    </location>
</feature>
<feature type="strand" evidence="6">
    <location>
        <begin position="221"/>
        <end position="225"/>
    </location>
</feature>
<feature type="helix" evidence="6">
    <location>
        <begin position="228"/>
        <end position="238"/>
    </location>
</feature>
<feature type="strand" evidence="6">
    <location>
        <begin position="244"/>
        <end position="247"/>
    </location>
</feature>
<feature type="strand" evidence="6">
    <location>
        <begin position="249"/>
        <end position="251"/>
    </location>
</feature>
<feature type="turn" evidence="6">
    <location>
        <begin position="255"/>
        <end position="257"/>
    </location>
</feature>
<feature type="helix" evidence="6">
    <location>
        <begin position="258"/>
        <end position="262"/>
    </location>
</feature>
<feature type="strand" evidence="6">
    <location>
        <begin position="266"/>
        <end position="272"/>
    </location>
</feature>
<feature type="turn" evidence="6">
    <location>
        <begin position="278"/>
        <end position="282"/>
    </location>
</feature>
<feature type="strand" evidence="6">
    <location>
        <begin position="287"/>
        <end position="290"/>
    </location>
</feature>
<feature type="helix" evidence="6">
    <location>
        <begin position="293"/>
        <end position="305"/>
    </location>
</feature>
<feature type="helix" evidence="6">
    <location>
        <begin position="309"/>
        <end position="314"/>
    </location>
</feature>
<evidence type="ECO:0000250" key="1"/>
<evidence type="ECO:0000255" key="2"/>
<evidence type="ECO:0000269" key="3">
    <source ref="5"/>
</evidence>
<evidence type="ECO:0000303" key="4">
    <source>
    </source>
</evidence>
<evidence type="ECO:0000305" key="5"/>
<evidence type="ECO:0007829" key="6">
    <source>
        <dbReference type="PDB" id="7YK1"/>
    </source>
</evidence>
<proteinExistence type="evidence at protein level"/>
<dbReference type="EC" id="2.7.6.1"/>
<dbReference type="EMBL" id="Y00971">
    <property type="protein sequence ID" value="CAA68785.1"/>
    <property type="molecule type" value="mRNA"/>
</dbReference>
<dbReference type="EMBL" id="BC030019">
    <property type="protein sequence ID" value="AAH30019.2"/>
    <property type="status" value="ALT_INIT"/>
    <property type="molecule type" value="mRNA"/>
</dbReference>
<dbReference type="EMBL" id="BC040483">
    <property type="protein sequence ID" value="AAH40483.3"/>
    <property type="molecule type" value="mRNA"/>
</dbReference>
<dbReference type="EMBL" id="BC110875">
    <property type="protein sequence ID" value="AAI10876.2"/>
    <property type="molecule type" value="mRNA"/>
</dbReference>
<dbReference type="EMBL" id="BC119662">
    <property type="protein sequence ID" value="AAI19663.1"/>
    <property type="molecule type" value="mRNA"/>
</dbReference>
<dbReference type="EMBL" id="BC119663">
    <property type="protein sequence ID" value="AAI19664.1"/>
    <property type="molecule type" value="mRNA"/>
</dbReference>
<dbReference type="EMBL" id="D28134">
    <property type="protein sequence ID" value="BAA05676.1"/>
    <property type="molecule type" value="Genomic_DNA"/>
</dbReference>
<dbReference type="CCDS" id="CCDS14150.1">
    <molecule id="P11908-1"/>
</dbReference>
<dbReference type="CCDS" id="CCDS43918.1">
    <molecule id="P11908-2"/>
</dbReference>
<dbReference type="PIR" id="S02778">
    <property type="entry name" value="KIHUR2"/>
</dbReference>
<dbReference type="RefSeq" id="NP_001034180.1">
    <molecule id="P11908-2"/>
    <property type="nucleotide sequence ID" value="NM_001039091.3"/>
</dbReference>
<dbReference type="RefSeq" id="NP_002756.1">
    <molecule id="P11908-1"/>
    <property type="nucleotide sequence ID" value="NM_002765.5"/>
</dbReference>
<dbReference type="PDB" id="7YK1">
    <property type="method" value="EM"/>
    <property type="resolution" value="3.08 A"/>
    <property type="chains" value="A/B/C/D/E/F=1-318"/>
</dbReference>
<dbReference type="PDB" id="8YI9">
    <property type="method" value="EM"/>
    <property type="resolution" value="3.40 A"/>
    <property type="chains" value="A/B/C/D/E/F=1-318"/>
</dbReference>
<dbReference type="PDBsum" id="7YK1"/>
<dbReference type="PDBsum" id="8YI9"/>
<dbReference type="EMDB" id="EMD-33883"/>
<dbReference type="EMDB" id="EMD-39312"/>
<dbReference type="SMR" id="P11908"/>
<dbReference type="BioGRID" id="111617">
    <property type="interactions" value="252"/>
</dbReference>
<dbReference type="FunCoup" id="P11908">
    <property type="interactions" value="1072"/>
</dbReference>
<dbReference type="IntAct" id="P11908">
    <property type="interactions" value="200"/>
</dbReference>
<dbReference type="MINT" id="P11908"/>
<dbReference type="STRING" id="9606.ENSP00000381504"/>
<dbReference type="GlyGen" id="P11908">
    <property type="glycosylation" value="1 site, 1 O-linked glycan (1 site)"/>
</dbReference>
<dbReference type="iPTMnet" id="P11908"/>
<dbReference type="MetOSite" id="P11908"/>
<dbReference type="PhosphoSitePlus" id="P11908"/>
<dbReference type="SwissPalm" id="P11908"/>
<dbReference type="BioMuta" id="PRPS2"/>
<dbReference type="DMDM" id="125583"/>
<dbReference type="REPRODUCTION-2DPAGE" id="IPI00219617"/>
<dbReference type="REPRODUCTION-2DPAGE" id="P11908"/>
<dbReference type="jPOST" id="P11908"/>
<dbReference type="MassIVE" id="P11908"/>
<dbReference type="PaxDb" id="9606-ENSP00000381504"/>
<dbReference type="PeptideAtlas" id="P11908"/>
<dbReference type="ProteomicsDB" id="52809">
    <molecule id="P11908-1"/>
</dbReference>
<dbReference type="ProteomicsDB" id="52810">
    <molecule id="P11908-2"/>
</dbReference>
<dbReference type="Pumba" id="P11908"/>
<dbReference type="Antibodypedia" id="8471">
    <property type="antibodies" value="234 antibodies from 29 providers"/>
</dbReference>
<dbReference type="DNASU" id="5634"/>
<dbReference type="Ensembl" id="ENST00000380668.10">
    <molecule id="P11908-1"/>
    <property type="protein sequence ID" value="ENSP00000370043.5"/>
    <property type="gene ID" value="ENSG00000101911.13"/>
</dbReference>
<dbReference type="Ensembl" id="ENST00000398491.6">
    <molecule id="P11908-2"/>
    <property type="protein sequence ID" value="ENSP00000381504.2"/>
    <property type="gene ID" value="ENSG00000101911.13"/>
</dbReference>
<dbReference type="GeneID" id="5634"/>
<dbReference type="KEGG" id="hsa:5634"/>
<dbReference type="MANE-Select" id="ENST00000380668.10">
    <property type="protein sequence ID" value="ENSP00000370043.5"/>
    <property type="RefSeq nucleotide sequence ID" value="NM_002765.5"/>
    <property type="RefSeq protein sequence ID" value="NP_002756.1"/>
</dbReference>
<dbReference type="UCSC" id="uc004cva.4">
    <molecule id="P11908-1"/>
    <property type="organism name" value="human"/>
</dbReference>
<dbReference type="AGR" id="HGNC:9465"/>
<dbReference type="CTD" id="5634"/>
<dbReference type="DisGeNET" id="5634"/>
<dbReference type="GeneCards" id="PRPS2"/>
<dbReference type="HGNC" id="HGNC:9465">
    <property type="gene designation" value="PRPS2"/>
</dbReference>
<dbReference type="HPA" id="ENSG00000101911">
    <property type="expression patterns" value="Tissue enhanced (ovary, parathyroid gland)"/>
</dbReference>
<dbReference type="MIM" id="311860">
    <property type="type" value="gene"/>
</dbReference>
<dbReference type="neXtProt" id="NX_P11908"/>
<dbReference type="OpenTargets" id="ENSG00000101911"/>
<dbReference type="PharmGKB" id="PA33820"/>
<dbReference type="VEuPathDB" id="HostDB:ENSG00000101911"/>
<dbReference type="eggNOG" id="KOG1448">
    <property type="taxonomic scope" value="Eukaryota"/>
</dbReference>
<dbReference type="GeneTree" id="ENSGT00950000182803"/>
<dbReference type="HOGENOM" id="CLU_033546_4_0_1"/>
<dbReference type="InParanoid" id="P11908"/>
<dbReference type="OMA" id="LLPEHKC"/>
<dbReference type="OrthoDB" id="413572at2759"/>
<dbReference type="PAN-GO" id="P11908">
    <property type="GO annotations" value="6 GO annotations based on evolutionary models"/>
</dbReference>
<dbReference type="PhylomeDB" id="P11908"/>
<dbReference type="TreeFam" id="TF106366"/>
<dbReference type="BioCyc" id="MetaCyc:HS02317-MONOMER"/>
<dbReference type="PathwayCommons" id="P11908"/>
<dbReference type="Reactome" id="R-HSA-73843">
    <property type="pathway name" value="5-Phosphoribose 1-diphosphate biosynthesis"/>
</dbReference>
<dbReference type="SignaLink" id="P11908"/>
<dbReference type="SIGNOR" id="P11908"/>
<dbReference type="UniPathway" id="UPA00087">
    <property type="reaction ID" value="UER00172"/>
</dbReference>
<dbReference type="BioGRID-ORCS" id="5634">
    <property type="hits" value="22 hits in 779 CRISPR screens"/>
</dbReference>
<dbReference type="CD-CODE" id="91857CE7">
    <property type="entry name" value="Nucleolus"/>
</dbReference>
<dbReference type="ChiTaRS" id="PRPS2">
    <property type="organism name" value="human"/>
</dbReference>
<dbReference type="GenomeRNAi" id="5634"/>
<dbReference type="Pharos" id="P11908">
    <property type="development level" value="Tbio"/>
</dbReference>
<dbReference type="PRO" id="PR:P11908"/>
<dbReference type="Proteomes" id="UP000005640">
    <property type="component" value="Chromosome X"/>
</dbReference>
<dbReference type="RNAct" id="P11908">
    <property type="molecule type" value="protein"/>
</dbReference>
<dbReference type="Bgee" id="ENSG00000101911">
    <property type="expression patterns" value="Expressed in seminal vesicle and 201 other cell types or tissues"/>
</dbReference>
<dbReference type="ExpressionAtlas" id="P11908">
    <property type="expression patterns" value="baseline and differential"/>
</dbReference>
<dbReference type="GO" id="GO:0005737">
    <property type="term" value="C:cytoplasm"/>
    <property type="evidence" value="ECO:0000318"/>
    <property type="project" value="GO_Central"/>
</dbReference>
<dbReference type="GO" id="GO:0005829">
    <property type="term" value="C:cytosol"/>
    <property type="evidence" value="ECO:0007669"/>
    <property type="project" value="Ensembl"/>
</dbReference>
<dbReference type="GO" id="GO:0005524">
    <property type="term" value="F:ATP binding"/>
    <property type="evidence" value="ECO:0000250"/>
    <property type="project" value="UniProtKB"/>
</dbReference>
<dbReference type="GO" id="GO:0042802">
    <property type="term" value="F:identical protein binding"/>
    <property type="evidence" value="ECO:0000353"/>
    <property type="project" value="IntAct"/>
</dbReference>
<dbReference type="GO" id="GO:0016301">
    <property type="term" value="F:kinase activity"/>
    <property type="evidence" value="ECO:0007669"/>
    <property type="project" value="UniProtKB-KW"/>
</dbReference>
<dbReference type="GO" id="GO:0000287">
    <property type="term" value="F:magnesium ion binding"/>
    <property type="evidence" value="ECO:0007669"/>
    <property type="project" value="InterPro"/>
</dbReference>
<dbReference type="GO" id="GO:0042803">
    <property type="term" value="F:protein homodimerization activity"/>
    <property type="evidence" value="ECO:0000250"/>
    <property type="project" value="UniProtKB"/>
</dbReference>
<dbReference type="GO" id="GO:0004749">
    <property type="term" value="F:ribose phosphate diphosphokinase activity"/>
    <property type="evidence" value="ECO:0000250"/>
    <property type="project" value="UniProtKB"/>
</dbReference>
<dbReference type="GO" id="GO:0006015">
    <property type="term" value="P:5-phosphoribose 1-diphosphate biosynthetic process"/>
    <property type="evidence" value="ECO:0000318"/>
    <property type="project" value="GO_Central"/>
</dbReference>
<dbReference type="GO" id="GO:0006139">
    <property type="term" value="P:nucleobase-containing compound metabolic process"/>
    <property type="evidence" value="ECO:0000304"/>
    <property type="project" value="ProtInc"/>
</dbReference>
<dbReference type="GO" id="GO:0006098">
    <property type="term" value="P:pentose-phosphate shunt"/>
    <property type="evidence" value="ECO:0007669"/>
    <property type="project" value="Ensembl"/>
</dbReference>
<dbReference type="GO" id="GO:0006164">
    <property type="term" value="P:purine nucleotide biosynthetic process"/>
    <property type="evidence" value="ECO:0000318"/>
    <property type="project" value="GO_Central"/>
</dbReference>
<dbReference type="GO" id="GO:0009156">
    <property type="term" value="P:ribonucleoside monophosphate biosynthetic process"/>
    <property type="evidence" value="ECO:0007669"/>
    <property type="project" value="InterPro"/>
</dbReference>
<dbReference type="CDD" id="cd06223">
    <property type="entry name" value="PRTases_typeI"/>
    <property type="match status" value="1"/>
</dbReference>
<dbReference type="FunFam" id="3.40.50.2020:FF:000031">
    <property type="entry name" value="Probable PRS4-ribose-phosphate pyrophosphokinase 3"/>
    <property type="match status" value="1"/>
</dbReference>
<dbReference type="FunFam" id="3.40.50.2020:FF:000005">
    <property type="entry name" value="Ribose-phosphate pyrophosphokinase 1"/>
    <property type="match status" value="1"/>
</dbReference>
<dbReference type="Gene3D" id="3.40.50.2020">
    <property type="match status" value="2"/>
</dbReference>
<dbReference type="HAMAP" id="MF_00583_B">
    <property type="entry name" value="RibP_PPkinase_B"/>
    <property type="match status" value="1"/>
</dbReference>
<dbReference type="InterPro" id="IPR000842">
    <property type="entry name" value="PRib_PP_synth_CS"/>
</dbReference>
<dbReference type="InterPro" id="IPR029099">
    <property type="entry name" value="Pribosyltran_N"/>
</dbReference>
<dbReference type="InterPro" id="IPR000836">
    <property type="entry name" value="PRibTrfase_dom"/>
</dbReference>
<dbReference type="InterPro" id="IPR029057">
    <property type="entry name" value="PRTase-like"/>
</dbReference>
<dbReference type="InterPro" id="IPR005946">
    <property type="entry name" value="Rib-P_diPkinase"/>
</dbReference>
<dbReference type="InterPro" id="IPR037515">
    <property type="entry name" value="Rib-P_diPkinase_bac"/>
</dbReference>
<dbReference type="NCBIfam" id="NF002320">
    <property type="entry name" value="PRK01259.1"/>
    <property type="match status" value="1"/>
</dbReference>
<dbReference type="NCBIfam" id="TIGR01251">
    <property type="entry name" value="ribP_PPkin"/>
    <property type="match status" value="1"/>
</dbReference>
<dbReference type="PANTHER" id="PTHR10210">
    <property type="entry name" value="RIBOSE-PHOSPHATE DIPHOSPHOKINASE FAMILY MEMBER"/>
    <property type="match status" value="1"/>
</dbReference>
<dbReference type="PANTHER" id="PTHR10210:SF32">
    <property type="entry name" value="RIBOSE-PHOSPHATE PYROPHOSPHOKINASE 2"/>
    <property type="match status" value="1"/>
</dbReference>
<dbReference type="Pfam" id="PF14572">
    <property type="entry name" value="Pribosyl_synth"/>
    <property type="match status" value="1"/>
</dbReference>
<dbReference type="Pfam" id="PF13793">
    <property type="entry name" value="Pribosyltran_N"/>
    <property type="match status" value="1"/>
</dbReference>
<dbReference type="SMART" id="SM01400">
    <property type="entry name" value="Pribosyltran_N"/>
    <property type="match status" value="1"/>
</dbReference>
<dbReference type="SUPFAM" id="SSF53271">
    <property type="entry name" value="PRTase-like"/>
    <property type="match status" value="1"/>
</dbReference>
<dbReference type="PROSITE" id="PS00114">
    <property type="entry name" value="PRPP_SYNTHASE"/>
    <property type="match status" value="1"/>
</dbReference>
<accession>P11908</accession>
<accession>Q0VDH9</accession>
<accession>Q0VDI0</accession>
<accession>Q15245</accession>
<accession>Q2TAK7</accession>
<reference key="1">
    <citation type="journal article" date="1989" name="FEBS Lett.">
        <title>Molecular cloning and sequencing of human cDNA for phosphoribosyl pyrophosphate synthetase subunit II.</title>
        <authorList>
            <person name="Iizasa T."/>
            <person name="Taira M."/>
            <person name="Shimada H."/>
            <person name="Ishijima S."/>
            <person name="Tatibana M."/>
        </authorList>
    </citation>
    <scope>NUCLEOTIDE SEQUENCE [MRNA] (ISOFORM 1)</scope>
    <source>
        <tissue>Testis</tissue>
    </source>
</reference>
<reference key="2">
    <citation type="journal article" date="1989" name="Adv. Exp. Med. Biol.">
        <title>Deduced amino acid sequence from human phosphoribosylpyrophosphate synthetase subunit II cDNA.</title>
        <authorList>
            <person name="Iizasa T."/>
            <person name="Taira M."/>
            <person name="Shimada H."/>
            <person name="Tatibana M."/>
        </authorList>
    </citation>
    <scope>NUCLEOTIDE SEQUENCE [MRNA] (ISOFORM 1)</scope>
    <source>
        <tissue>Testis</tissue>
    </source>
</reference>
<reference key="3">
    <citation type="journal article" date="2004" name="Genome Res.">
        <title>The status, quality, and expansion of the NIH full-length cDNA project: the Mammalian Gene Collection (MGC).</title>
        <authorList>
            <consortium name="The MGC Project Team"/>
        </authorList>
    </citation>
    <scope>NUCLEOTIDE SEQUENCE [LARGE SCALE MRNA] (ISOFORMS 1 AND 2)</scope>
    <source>
        <tissue>Testis</tissue>
        <tissue>Uterus</tissue>
    </source>
</reference>
<reference key="4">
    <citation type="journal article" date="1992" name="Biochim. Biophys. Acta">
        <title>Promoter regions of the human X-linked housekeeping genes PRPS1 and PRPS2 encoding phosphoribosylpyrophosphate synthetase subunit I and II isoforms.</title>
        <authorList>
            <person name="Ishizuka T."/>
            <person name="Iizasa T."/>
            <person name="Taira M."/>
            <person name="Ishijima S."/>
            <person name="Sonoda T."/>
            <person name="Shimada H."/>
            <person name="Nagatake N."/>
            <person name="Tatibana M."/>
        </authorList>
    </citation>
    <scope>NUCLEOTIDE SEQUENCE [GENOMIC DNA] OF 1-40</scope>
    <source>
        <tissue>Leukocyte</tissue>
    </source>
</reference>
<reference key="5">
    <citation type="submission" date="2009-12" db="UniProtKB">
        <authorList>
            <person name="Bienvenut W.V."/>
            <person name="Calvo F."/>
            <person name="Bensaad K."/>
            <person name="Vousden K.H."/>
            <person name="Matallanas D."/>
            <person name="Cooper W.N."/>
            <person name="Kolch W."/>
            <person name="Lourenco F."/>
            <person name="Olson M.F."/>
        </authorList>
    </citation>
    <scope>PROTEIN SEQUENCE OF 2-29; 34-49; 85-96; 164-196; 205-214; 244-282 AND 287-318</scope>
    <scope>CLEAVAGE OF INITIATOR METHIONINE</scope>
    <scope>IDENTIFICATION BY MASS SPECTROMETRY</scope>
    <source>
        <tissue>Cervix carcinoma</tissue>
        <tissue>Mammary carcinoma</tissue>
        <tissue>Osteosarcoma</tissue>
    </source>
</reference>
<reference key="6">
    <citation type="journal article" date="2011" name="BMC Syst. Biol.">
        <title>Initial characterization of the human central proteome.</title>
        <authorList>
            <person name="Burkard T.R."/>
            <person name="Planyavsky M."/>
            <person name="Kaupe I."/>
            <person name="Breitwieser F.P."/>
            <person name="Buerckstuemmer T."/>
            <person name="Bennett K.L."/>
            <person name="Superti-Furga G."/>
            <person name="Colinge J."/>
        </authorList>
    </citation>
    <scope>IDENTIFICATION BY MASS SPECTROMETRY [LARGE SCALE ANALYSIS]</scope>
</reference>
<gene>
    <name type="primary">PRPS2</name>
</gene>